<gene>
    <name evidence="1" type="primary">fadJ</name>
    <name type="ordered locus">SbBS512_E2721</name>
</gene>
<organism>
    <name type="scientific">Shigella boydii serotype 18 (strain CDC 3083-94 / BS512)</name>
    <dbReference type="NCBI Taxonomy" id="344609"/>
    <lineage>
        <taxon>Bacteria</taxon>
        <taxon>Pseudomonadati</taxon>
        <taxon>Pseudomonadota</taxon>
        <taxon>Gammaproteobacteria</taxon>
        <taxon>Enterobacterales</taxon>
        <taxon>Enterobacteriaceae</taxon>
        <taxon>Shigella</taxon>
    </lineage>
</organism>
<feature type="chain" id="PRO_1000185955" description="Fatty acid oxidation complex subunit alpha">
    <location>
        <begin position="1"/>
        <end position="714"/>
    </location>
</feature>
<feature type="region of interest" description="Enoyl-CoA hydratase" evidence="1">
    <location>
        <begin position="1"/>
        <end position="190"/>
    </location>
</feature>
<feature type="region of interest" description="3-hydroxyacyl-CoA dehydrogenase" evidence="1">
    <location>
        <begin position="306"/>
        <end position="714"/>
    </location>
</feature>
<feature type="site" description="Important for catalytic activity" evidence="1">
    <location>
        <position position="118"/>
    </location>
</feature>
<feature type="site" description="Important for catalytic activity" evidence="1">
    <location>
        <position position="140"/>
    </location>
</feature>
<evidence type="ECO:0000255" key="1">
    <source>
        <dbReference type="HAMAP-Rule" id="MF_01617"/>
    </source>
</evidence>
<comment type="function">
    <text evidence="1">Catalyzes the formation of a hydroxyacyl-CoA by addition of water on enoyl-CoA. Also exhibits 3-hydroxyacyl-CoA epimerase and 3-hydroxyacyl-CoA dehydrogenase activities.</text>
</comment>
<comment type="catalytic activity">
    <reaction evidence="1">
        <text>a (3S)-3-hydroxyacyl-CoA = a (2E)-enoyl-CoA + H2O</text>
        <dbReference type="Rhea" id="RHEA:16105"/>
        <dbReference type="ChEBI" id="CHEBI:15377"/>
        <dbReference type="ChEBI" id="CHEBI:57318"/>
        <dbReference type="ChEBI" id="CHEBI:58856"/>
        <dbReference type="EC" id="4.2.1.17"/>
    </reaction>
</comment>
<comment type="catalytic activity">
    <reaction evidence="1">
        <text>a 4-saturated-(3S)-3-hydroxyacyl-CoA = a (3E)-enoyl-CoA + H2O</text>
        <dbReference type="Rhea" id="RHEA:20724"/>
        <dbReference type="ChEBI" id="CHEBI:15377"/>
        <dbReference type="ChEBI" id="CHEBI:58521"/>
        <dbReference type="ChEBI" id="CHEBI:137480"/>
        <dbReference type="EC" id="4.2.1.17"/>
    </reaction>
</comment>
<comment type="catalytic activity">
    <reaction evidence="1">
        <text>a (3S)-3-hydroxyacyl-CoA + NAD(+) = a 3-oxoacyl-CoA + NADH + H(+)</text>
        <dbReference type="Rhea" id="RHEA:22432"/>
        <dbReference type="ChEBI" id="CHEBI:15378"/>
        <dbReference type="ChEBI" id="CHEBI:57318"/>
        <dbReference type="ChEBI" id="CHEBI:57540"/>
        <dbReference type="ChEBI" id="CHEBI:57945"/>
        <dbReference type="ChEBI" id="CHEBI:90726"/>
        <dbReference type="EC" id="1.1.1.35"/>
    </reaction>
</comment>
<comment type="catalytic activity">
    <reaction evidence="1">
        <text>(3S)-3-hydroxybutanoyl-CoA = (3R)-3-hydroxybutanoyl-CoA</text>
        <dbReference type="Rhea" id="RHEA:21760"/>
        <dbReference type="ChEBI" id="CHEBI:57315"/>
        <dbReference type="ChEBI" id="CHEBI:57316"/>
        <dbReference type="EC" id="5.1.2.3"/>
    </reaction>
</comment>
<comment type="pathway">
    <text evidence="1">Lipid metabolism; fatty acid beta-oxidation.</text>
</comment>
<comment type="subunit">
    <text evidence="1">Heterotetramer of two alpha chains (FadJ) and two beta chains (FadI).</text>
</comment>
<comment type="subcellular location">
    <subcellularLocation>
        <location evidence="1">Cytoplasm</location>
    </subcellularLocation>
</comment>
<comment type="similarity">
    <text evidence="1">In the N-terminal section; belongs to the enoyl-CoA hydratase/isomerase family.</text>
</comment>
<comment type="similarity">
    <text evidence="1">In the central section; belongs to the 3-hydroxyacyl-CoA dehydrogenase family.</text>
</comment>
<protein>
    <recommendedName>
        <fullName evidence="1">Fatty acid oxidation complex subunit alpha</fullName>
    </recommendedName>
    <domain>
        <recommendedName>
            <fullName evidence="1">Enoyl-CoA hydratase/3-hydroxybutyryl-CoA epimerase</fullName>
            <ecNumber evidence="1">4.2.1.17</ecNumber>
            <ecNumber evidence="1">5.1.2.3</ecNumber>
        </recommendedName>
    </domain>
    <domain>
        <recommendedName>
            <fullName evidence="1">3-hydroxyacyl-CoA dehydrogenase</fullName>
            <ecNumber evidence="1">1.1.1.35</ecNumber>
        </recommendedName>
    </domain>
</protein>
<reference key="1">
    <citation type="submission" date="2008-05" db="EMBL/GenBank/DDBJ databases">
        <title>Complete sequence of Shigella boydii serotype 18 strain BS512.</title>
        <authorList>
            <person name="Rasko D.A."/>
            <person name="Rosovitz M."/>
            <person name="Maurelli A.T."/>
            <person name="Myers G."/>
            <person name="Seshadri R."/>
            <person name="Cer R."/>
            <person name="Jiang L."/>
            <person name="Ravel J."/>
            <person name="Sebastian Y."/>
        </authorList>
    </citation>
    <scope>NUCLEOTIDE SEQUENCE [LARGE SCALE GENOMIC DNA]</scope>
    <source>
        <strain>CDC 3083-94 / BS512</strain>
    </source>
</reference>
<keyword id="KW-0963">Cytoplasm</keyword>
<keyword id="KW-0276">Fatty acid metabolism</keyword>
<keyword id="KW-0413">Isomerase</keyword>
<keyword id="KW-0442">Lipid degradation</keyword>
<keyword id="KW-0443">Lipid metabolism</keyword>
<keyword id="KW-0456">Lyase</keyword>
<keyword id="KW-0511">Multifunctional enzyme</keyword>
<keyword id="KW-0520">NAD</keyword>
<keyword id="KW-0560">Oxidoreductase</keyword>
<keyword id="KW-1185">Reference proteome</keyword>
<accession>B2TWV4</accession>
<name>FADJ_SHIB3</name>
<proteinExistence type="inferred from homology"/>
<dbReference type="EC" id="4.2.1.17" evidence="1"/>
<dbReference type="EC" id="5.1.2.3" evidence="1"/>
<dbReference type="EC" id="1.1.1.35" evidence="1"/>
<dbReference type="EMBL" id="CP001063">
    <property type="protein sequence ID" value="ACD06790.1"/>
    <property type="molecule type" value="Genomic_DNA"/>
</dbReference>
<dbReference type="RefSeq" id="WP_000424993.1">
    <property type="nucleotide sequence ID" value="NC_010658.1"/>
</dbReference>
<dbReference type="SMR" id="B2TWV4"/>
<dbReference type="STRING" id="344609.SbBS512_E2721"/>
<dbReference type="KEGG" id="sbc:SbBS512_E2721"/>
<dbReference type="HOGENOM" id="CLU_009834_16_1_6"/>
<dbReference type="UniPathway" id="UPA00659"/>
<dbReference type="Proteomes" id="UP000001030">
    <property type="component" value="Chromosome"/>
</dbReference>
<dbReference type="GO" id="GO:0005737">
    <property type="term" value="C:cytoplasm"/>
    <property type="evidence" value="ECO:0007669"/>
    <property type="project" value="UniProtKB-SubCell"/>
</dbReference>
<dbReference type="GO" id="GO:0008692">
    <property type="term" value="F:3-hydroxybutyryl-CoA epimerase activity"/>
    <property type="evidence" value="ECO:0007669"/>
    <property type="project" value="UniProtKB-UniRule"/>
</dbReference>
<dbReference type="GO" id="GO:0004300">
    <property type="term" value="F:enoyl-CoA hydratase activity"/>
    <property type="evidence" value="ECO:0007669"/>
    <property type="project" value="UniProtKB-UniRule"/>
</dbReference>
<dbReference type="GO" id="GO:0016509">
    <property type="term" value="F:long-chain-3-hydroxyacyl-CoA dehydrogenase activity"/>
    <property type="evidence" value="ECO:0007669"/>
    <property type="project" value="TreeGrafter"/>
</dbReference>
<dbReference type="GO" id="GO:0070403">
    <property type="term" value="F:NAD+ binding"/>
    <property type="evidence" value="ECO:0007669"/>
    <property type="project" value="InterPro"/>
</dbReference>
<dbReference type="GO" id="GO:0006635">
    <property type="term" value="P:fatty acid beta-oxidation"/>
    <property type="evidence" value="ECO:0007669"/>
    <property type="project" value="UniProtKB-UniRule"/>
</dbReference>
<dbReference type="CDD" id="cd06558">
    <property type="entry name" value="crotonase-like"/>
    <property type="match status" value="1"/>
</dbReference>
<dbReference type="FunFam" id="1.10.1040.50:FF:000003">
    <property type="entry name" value="Fatty acid oxidation complex subunit alpha"/>
    <property type="match status" value="1"/>
</dbReference>
<dbReference type="FunFam" id="3.90.226.10:FF:000011">
    <property type="entry name" value="Fatty acid oxidation complex subunit alpha"/>
    <property type="match status" value="1"/>
</dbReference>
<dbReference type="FunFam" id="3.40.50.720:FF:000009">
    <property type="entry name" value="Fatty oxidation complex, alpha subunit"/>
    <property type="match status" value="1"/>
</dbReference>
<dbReference type="Gene3D" id="1.10.1040.50">
    <property type="match status" value="1"/>
</dbReference>
<dbReference type="Gene3D" id="3.90.226.10">
    <property type="entry name" value="2-enoyl-CoA Hydratase, Chain A, domain 1"/>
    <property type="match status" value="1"/>
</dbReference>
<dbReference type="Gene3D" id="3.40.50.720">
    <property type="entry name" value="NAD(P)-binding Rossmann-like Domain"/>
    <property type="match status" value="1"/>
</dbReference>
<dbReference type="HAMAP" id="MF_01617">
    <property type="entry name" value="FadJ"/>
    <property type="match status" value="1"/>
</dbReference>
<dbReference type="InterPro" id="IPR006180">
    <property type="entry name" value="3-OHacyl-CoA_DH_CS"/>
</dbReference>
<dbReference type="InterPro" id="IPR006176">
    <property type="entry name" value="3-OHacyl-CoA_DH_NAD-bd"/>
</dbReference>
<dbReference type="InterPro" id="IPR006108">
    <property type="entry name" value="3HC_DH_C"/>
</dbReference>
<dbReference type="InterPro" id="IPR008927">
    <property type="entry name" value="6-PGluconate_DH-like_C_sf"/>
</dbReference>
<dbReference type="InterPro" id="IPR029045">
    <property type="entry name" value="ClpP/crotonase-like_dom_sf"/>
</dbReference>
<dbReference type="InterPro" id="IPR001753">
    <property type="entry name" value="Enoyl-CoA_hydra/iso"/>
</dbReference>
<dbReference type="InterPro" id="IPR050136">
    <property type="entry name" value="FA_oxidation_alpha_subunit"/>
</dbReference>
<dbReference type="InterPro" id="IPR012802">
    <property type="entry name" value="FadJ"/>
</dbReference>
<dbReference type="InterPro" id="IPR036291">
    <property type="entry name" value="NAD(P)-bd_dom_sf"/>
</dbReference>
<dbReference type="NCBIfam" id="TIGR02440">
    <property type="entry name" value="FadJ"/>
    <property type="match status" value="1"/>
</dbReference>
<dbReference type="NCBIfam" id="NF008363">
    <property type="entry name" value="PRK11154.1"/>
    <property type="match status" value="1"/>
</dbReference>
<dbReference type="PANTHER" id="PTHR43612">
    <property type="entry name" value="TRIFUNCTIONAL ENZYME SUBUNIT ALPHA"/>
    <property type="match status" value="1"/>
</dbReference>
<dbReference type="PANTHER" id="PTHR43612:SF3">
    <property type="entry name" value="TRIFUNCTIONAL ENZYME SUBUNIT ALPHA, MITOCHONDRIAL"/>
    <property type="match status" value="1"/>
</dbReference>
<dbReference type="Pfam" id="PF00725">
    <property type="entry name" value="3HCDH"/>
    <property type="match status" value="2"/>
</dbReference>
<dbReference type="Pfam" id="PF02737">
    <property type="entry name" value="3HCDH_N"/>
    <property type="match status" value="1"/>
</dbReference>
<dbReference type="Pfam" id="PF00378">
    <property type="entry name" value="ECH_1"/>
    <property type="match status" value="1"/>
</dbReference>
<dbReference type="SUPFAM" id="SSF48179">
    <property type="entry name" value="6-phosphogluconate dehydrogenase C-terminal domain-like"/>
    <property type="match status" value="2"/>
</dbReference>
<dbReference type="SUPFAM" id="SSF52096">
    <property type="entry name" value="ClpP/crotonase"/>
    <property type="match status" value="1"/>
</dbReference>
<dbReference type="SUPFAM" id="SSF51735">
    <property type="entry name" value="NAD(P)-binding Rossmann-fold domains"/>
    <property type="match status" value="1"/>
</dbReference>
<dbReference type="PROSITE" id="PS00067">
    <property type="entry name" value="3HCDH"/>
    <property type="match status" value="1"/>
</dbReference>
<sequence>MEMASAFTLNVRLDNIAIITIDVPDEKMNTLKAEFASQVRAIIKQLRENKELRGVVFISAKPDNFIAGADINMIGNCKTAQEAEALARQGQQLMAEIHALPIPVIAAIHGACLGGGLELALACHGRVCTDDPKTVLGLPEVQLGLLPGSGGTQRLPRLIGVSTALEMILTGKQLRAKQALKLGLVDDVVPHSILLEVAVELAKKDRPSSRPLPVRERILAGPLGRALLFKMVGKKTEHKTQGNYPATERILEVVETGLAQGTSSGYDAEARAFGELAMTPQSQALRSIFFASTDVKKDPGSDAPPAPLNSVGILGGGLMGGGIAYVTACKAGLPVRIKDINPQGINHALKYSWDQLEGKVRRRHLKASERDKQLALISGTTDYRGFAHRDLIIEAVFENLELKQQMVAEVEQNCAAHTIFASNTSSLPIGDIAAHATRPEQVIGLHFFSPVEKMPLVEIIPHAGTSAQTIATTVKLAKKQGKTPIVVRDKAGFYVNRILAPYINEAIRMLTKGERVEHIDAALVKFGFPVGPIQLLDEVGIDTGTKIIPVLEAAYGERFSAPANVVSSILNDDRKGRKNGRGFYLYGQKGRKSKKQVDPAIYPLIGAQGQGRLSAPQVAERCVMLMLNEAVRCVDEQVIRSVRDGDIGAVFGIGFPPFLGGPFRYIDSLGAGEVVAIMQRLATQYGSRFTPCERLVEMGARGESFWKTTATDLQ</sequence>